<feature type="chain" id="PRO_0000368062" description="Inner capsid protein VP2">
    <location>
        <begin position="1"/>
        <end position="890"/>
    </location>
</feature>
<feature type="region of interest" description="5-fold hub; involved in the encapsidation of VP1 and VP3" evidence="1">
    <location>
        <begin position="1"/>
        <end position="88"/>
    </location>
</feature>
<feature type="region of interest" description="Disordered" evidence="2">
    <location>
        <begin position="1"/>
        <end position="46"/>
    </location>
</feature>
<feature type="region of interest" description="Hydrophobic" evidence="1">
    <location>
        <begin position="404"/>
        <end position="424"/>
    </location>
</feature>
<feature type="region of interest" description="Hydrophobic" evidence="1">
    <location>
        <begin position="432"/>
        <end position="452"/>
    </location>
</feature>
<feature type="compositionally biased region" description="Basic and acidic residues" evidence="2">
    <location>
        <begin position="19"/>
        <end position="30"/>
    </location>
</feature>
<feature type="site" description="Interaction with the intermediate capsid protein VP6" evidence="1">
    <location>
        <position position="232"/>
    </location>
</feature>
<feature type="site" description="Interaction with the intermediate capsid protein VP6" evidence="1">
    <location>
        <position position="236"/>
    </location>
</feature>
<feature type="site" description="Interaction with the intermediate capsid protein VP6" evidence="1">
    <location>
        <position position="849"/>
    </location>
</feature>
<feature type="site" description="Interaction with the intermediate capsid protein VP6" evidence="1">
    <location>
        <position position="851"/>
    </location>
</feature>
<organismHost>
    <name type="scientific">Homo sapiens</name>
    <name type="common">Human</name>
    <dbReference type="NCBI Taxonomy" id="9606"/>
</organismHost>
<organism>
    <name type="scientific">Rotavirus A (strain RVA/Human/United States/D/1974/G1P1A[8])</name>
    <name type="common">RV-A</name>
    <dbReference type="NCBI Taxonomy" id="578831"/>
    <lineage>
        <taxon>Viruses</taxon>
        <taxon>Riboviria</taxon>
        <taxon>Orthornavirae</taxon>
        <taxon>Duplornaviricota</taxon>
        <taxon>Resentoviricetes</taxon>
        <taxon>Reovirales</taxon>
        <taxon>Sedoreoviridae</taxon>
        <taxon>Rotavirus</taxon>
        <taxon>Rotavirus A</taxon>
    </lineage>
</organism>
<reference key="1">
    <citation type="journal article" date="2008" name="J. Virol.">
        <title>Full genome-based classification of rotaviruses reveals a common origin between human Wa-Like and porcine rotavirus strains and human DS-1-like and bovine rotavirus strains.</title>
        <authorList>
            <person name="Matthijnssens J."/>
            <person name="Ciarlet M."/>
            <person name="Heiman E.M."/>
            <person name="Arijs I."/>
            <person name="Delbeke T."/>
            <person name="McDonald S.M."/>
            <person name="Palombo E.A."/>
            <person name="Iturriza-Gomara M."/>
            <person name="Maes P."/>
            <person name="Patton J.T."/>
            <person name="Rahman M."/>
            <person name="Van Ranst M."/>
        </authorList>
    </citation>
    <scope>NUCLEOTIDE SEQUENCE [GENOMIC RNA]</scope>
</reference>
<proteinExistence type="inferred from homology"/>
<keyword id="KW-0167">Capsid protein</keyword>
<keyword id="KW-1153">Inner capsid protein</keyword>
<keyword id="KW-1185">Reference proteome</keyword>
<keyword id="KW-0677">Repeat</keyword>
<keyword id="KW-0694">RNA-binding</keyword>
<keyword id="KW-1141">T=2 icosahedral capsid protein</keyword>
<keyword id="KW-0832">Ubl conjugation</keyword>
<keyword id="KW-0946">Virion</keyword>
<comment type="function">
    <text evidence="1">Inner capsid protein that self-assembles to form an icosahedral capsid with a T=2 symmetry, which consists of 120 copies of VP2, with channels at each of its five-fold vertices. This capsid constitutes the innermost concentric layer of the viral mature particle. It encapsidates the polymerase VP1, the capping enzyme VP3 and the genomic dsRNA, thereby defining the core. The innermost VP2 capsid and the intermediate VP6 capsid remain intact following cell entry to protect the dsRNA from degradation and to prevent unfavorable antiviral responses in the host cell during all the replication cycle of the virus. Nascent transcripts are transcribed within the structural confines of this double-layered particle (DLP) and are extruded through the channels formed by VP2 N-termini. VP2 is required for the replicase activity of VP1 polymerase. Probably recruits a copy of a VP1-VP3 complex, potentially along with a segment of plus-strand RNA, as a decamer of VP2 assembles. May activate the autoinhibited VP1/RNA complex to coordinate packaging and genome replication.</text>
</comment>
<comment type="subunit">
    <text evidence="1">Homodecamer; each decamer is made up of two conformers of VP2, called VP2A and VP2B. Interacts with a VP1-VP3 complex. Interacts with the intermediate capsid protein VP6. Interacts with NSP5. Interacts (via N-terminus) with NSP2.</text>
</comment>
<comment type="subcellular location">
    <subcellularLocation>
        <location evidence="1">Virion</location>
    </subcellularLocation>
    <text evidence="1">Inner capsid protein. Also found in spherical cytoplasmic structures, called virus factories, that appear early after infection and are the site of viral replication and packaging.</text>
</comment>
<comment type="domain">
    <text evidence="1">The N-terminus binds RNA. It is necessary for encapsidation of VP1 and VP3. The N-termini of 10 VP2 molecules form a cylindrical hub underneath each 5-fold axis of the inner capsid.</text>
</comment>
<comment type="PTM">
    <text evidence="1">Sumoylated with SUMO1 and SUMO2. Sumoylation of viral proteins seems to have a positive role on viral replication.</text>
</comment>
<comment type="similarity">
    <text evidence="1">Belongs to the rotavirus VP2 family.</text>
</comment>
<name>VP2_ROTAD</name>
<protein>
    <recommendedName>
        <fullName evidence="1">Inner capsid protein VP2</fullName>
    </recommendedName>
</protein>
<dbReference type="EMBL" id="EF583022">
    <property type="protein sequence ID" value="ABU87831.1"/>
    <property type="molecule type" value="Genomic_RNA"/>
</dbReference>
<dbReference type="SMR" id="B1NKR4"/>
<dbReference type="Proteomes" id="UP000006368">
    <property type="component" value="Genome"/>
</dbReference>
<dbReference type="GO" id="GO:0039616">
    <property type="term" value="C:T=2 icosahedral viral capsid"/>
    <property type="evidence" value="ECO:0007669"/>
    <property type="project" value="UniProtKB-UniRule"/>
</dbReference>
<dbReference type="GO" id="GO:0039625">
    <property type="term" value="C:viral inner capsid"/>
    <property type="evidence" value="ECO:0007669"/>
    <property type="project" value="UniProtKB-UniRule"/>
</dbReference>
<dbReference type="GO" id="GO:0019013">
    <property type="term" value="C:viral nucleocapsid"/>
    <property type="evidence" value="ECO:0007669"/>
    <property type="project" value="UniProtKB-UniRule"/>
</dbReference>
<dbReference type="GO" id="GO:0003723">
    <property type="term" value="F:RNA binding"/>
    <property type="evidence" value="ECO:0007669"/>
    <property type="project" value="UniProtKB-UniRule"/>
</dbReference>
<dbReference type="HAMAP" id="MF_04123">
    <property type="entry name" value="Rota_VP2"/>
    <property type="match status" value="1"/>
</dbReference>
<dbReference type="HAMAP" id="MF_04127">
    <property type="entry name" value="Rota_VP2_A"/>
    <property type="match status" value="1"/>
</dbReference>
<dbReference type="InterPro" id="IPR007779">
    <property type="entry name" value="Rotavirus_VP2"/>
</dbReference>
<dbReference type="Pfam" id="PF05087">
    <property type="entry name" value="Rota_VP2"/>
    <property type="match status" value="1"/>
</dbReference>
<accession>B1NKR4</accession>
<sequence length="890" mass="103725">MAYRKRGAKRENLPQQNERLQEKEIEKDVDVTMENKNNNRKQQLSDKVLSQKEEIITDAQDDIKIAGEIKKSSKEESKQLLEILKTKEDHQKEIQYEILQKTIPTFESKESILKKLEDIRPEQAKKQMKLFRIFEPKQLPIYRANGEKELRNRWYWKLKKDTLPDGDYDVREYFLNLYDQILIEMPDYLLLKDMAVENKNSRDAGKVVDSETANICDAIFQDEETEGVVRRFIADMRQQVQADRNIVNYPSILHPIDHAFNEYFLNHQLVEPLNNEIIFNYIPERIRNDVNYILNMDMNLPSTARYIRPNLLQDRLNLHDNFESLWDTITTSNYILARSVVPDLKEKELVSTEAQIQKMSQDLQLEALTIQSETQFLAGINSQAANDCFKTLIAAMLSQRTMSLDFVTTNYMSLISGMWLLTVIPNDMFLRESLVACELAIINTIVYPAFGMQRMHYRNGDPQTPFQIAEQQIQNFQVANWLHFTNNNRFRQVVIDGVLNQTLNDNIRNGQVINQLMEALMQLSRQQFPTMPVDYKRSIQRGILLLSNRLGQLVDLTRLVSYNYETLMACVTMNMQHVQTLTTEKLQLTSVTSLCMLIGNTTVIPSPQTLFHYYNVNVNFHSNYNERINDAVAIITAANRLNLYQKKMKSIVEDFLKRLQIFDVPRVPDDQMYRLRDRLRLLPVERRRLDIFNLILMNMEQIERASDKIAQGVIIAYRDMQLERDEMYGYVNIARNLDGYQQINLEELMRTGDYGQITNMLLNNQPVALVGALPFVTDSSVISLIAKLDATVFAQIVKLRKVDTLKPILYKINSDSNDFYLVANYDWIPTSTTKVYKQVPQPFDFRASMHMLTSNLTFTVYSDLLSFVSADTVEPINAVAFDNMRIMNEL</sequence>
<evidence type="ECO:0000255" key="1">
    <source>
        <dbReference type="HAMAP-Rule" id="MF_04127"/>
    </source>
</evidence>
<evidence type="ECO:0000256" key="2">
    <source>
        <dbReference type="SAM" id="MobiDB-lite"/>
    </source>
</evidence>